<dbReference type="EC" id="3.6.1.27" evidence="1"/>
<dbReference type="EMBL" id="AE017285">
    <property type="protein sequence ID" value="AAS96137.1"/>
    <property type="molecule type" value="Genomic_DNA"/>
</dbReference>
<dbReference type="RefSeq" id="WP_010938949.1">
    <property type="nucleotide sequence ID" value="NC_002937.3"/>
</dbReference>
<dbReference type="RefSeq" id="YP_010878.1">
    <property type="nucleotide sequence ID" value="NC_002937.3"/>
</dbReference>
<dbReference type="SMR" id="P62464"/>
<dbReference type="STRING" id="882.DVU_1660"/>
<dbReference type="PaxDb" id="882-DVU_1660"/>
<dbReference type="EnsemblBacteria" id="AAS96137">
    <property type="protein sequence ID" value="AAS96137"/>
    <property type="gene ID" value="DVU_1660"/>
</dbReference>
<dbReference type="KEGG" id="dvu:DVU_1660"/>
<dbReference type="PATRIC" id="fig|882.5.peg.1533"/>
<dbReference type="eggNOG" id="COG1968">
    <property type="taxonomic scope" value="Bacteria"/>
</dbReference>
<dbReference type="HOGENOM" id="CLU_060296_2_0_7"/>
<dbReference type="OrthoDB" id="9808289at2"/>
<dbReference type="PhylomeDB" id="P62464"/>
<dbReference type="Proteomes" id="UP000002194">
    <property type="component" value="Chromosome"/>
</dbReference>
<dbReference type="GO" id="GO:0005886">
    <property type="term" value="C:plasma membrane"/>
    <property type="evidence" value="ECO:0007669"/>
    <property type="project" value="UniProtKB-SubCell"/>
</dbReference>
<dbReference type="GO" id="GO:0050380">
    <property type="term" value="F:undecaprenyl-diphosphatase activity"/>
    <property type="evidence" value="ECO:0007669"/>
    <property type="project" value="UniProtKB-UniRule"/>
</dbReference>
<dbReference type="GO" id="GO:0071555">
    <property type="term" value="P:cell wall organization"/>
    <property type="evidence" value="ECO:0007669"/>
    <property type="project" value="UniProtKB-KW"/>
</dbReference>
<dbReference type="GO" id="GO:0009252">
    <property type="term" value="P:peptidoglycan biosynthetic process"/>
    <property type="evidence" value="ECO:0007669"/>
    <property type="project" value="UniProtKB-KW"/>
</dbReference>
<dbReference type="GO" id="GO:0008360">
    <property type="term" value="P:regulation of cell shape"/>
    <property type="evidence" value="ECO:0007669"/>
    <property type="project" value="UniProtKB-KW"/>
</dbReference>
<dbReference type="GO" id="GO:0046677">
    <property type="term" value="P:response to antibiotic"/>
    <property type="evidence" value="ECO:0007669"/>
    <property type="project" value="UniProtKB-UniRule"/>
</dbReference>
<dbReference type="HAMAP" id="MF_01006">
    <property type="entry name" value="Undec_diphosphatase"/>
    <property type="match status" value="1"/>
</dbReference>
<dbReference type="InterPro" id="IPR003824">
    <property type="entry name" value="UppP"/>
</dbReference>
<dbReference type="NCBIfam" id="NF001389">
    <property type="entry name" value="PRK00281.1-2"/>
    <property type="match status" value="1"/>
</dbReference>
<dbReference type="NCBIfam" id="NF001390">
    <property type="entry name" value="PRK00281.1-4"/>
    <property type="match status" value="1"/>
</dbReference>
<dbReference type="NCBIfam" id="TIGR00753">
    <property type="entry name" value="undec_PP_bacA"/>
    <property type="match status" value="1"/>
</dbReference>
<dbReference type="PANTHER" id="PTHR30622">
    <property type="entry name" value="UNDECAPRENYL-DIPHOSPHATASE"/>
    <property type="match status" value="1"/>
</dbReference>
<dbReference type="PANTHER" id="PTHR30622:SF3">
    <property type="entry name" value="UNDECAPRENYL-DIPHOSPHATASE"/>
    <property type="match status" value="1"/>
</dbReference>
<dbReference type="Pfam" id="PF02673">
    <property type="entry name" value="BacA"/>
    <property type="match status" value="1"/>
</dbReference>
<comment type="function">
    <text evidence="1">Catalyzes the dephosphorylation of undecaprenyl diphosphate (UPP). Confers resistance to bacitracin.</text>
</comment>
<comment type="catalytic activity">
    <reaction evidence="1">
        <text>di-trans,octa-cis-undecaprenyl diphosphate + H2O = di-trans,octa-cis-undecaprenyl phosphate + phosphate + H(+)</text>
        <dbReference type="Rhea" id="RHEA:28094"/>
        <dbReference type="ChEBI" id="CHEBI:15377"/>
        <dbReference type="ChEBI" id="CHEBI:15378"/>
        <dbReference type="ChEBI" id="CHEBI:43474"/>
        <dbReference type="ChEBI" id="CHEBI:58405"/>
        <dbReference type="ChEBI" id="CHEBI:60392"/>
        <dbReference type="EC" id="3.6.1.27"/>
    </reaction>
</comment>
<comment type="subcellular location">
    <subcellularLocation>
        <location evidence="1">Cell inner membrane</location>
        <topology evidence="1">Multi-pass membrane protein</topology>
    </subcellularLocation>
</comment>
<comment type="miscellaneous">
    <text>Bacitracin is thought to be involved in the inhibition of peptidoglycan synthesis by sequestering undecaprenyl diphosphate, thereby reducing the pool of lipid carrier available.</text>
</comment>
<comment type="similarity">
    <text evidence="1">Belongs to the UppP family.</text>
</comment>
<feature type="chain" id="PRO_0000151145" description="Undecaprenyl-diphosphatase">
    <location>
        <begin position="1"/>
        <end position="265"/>
    </location>
</feature>
<feature type="transmembrane region" description="Helical" evidence="1">
    <location>
        <begin position="42"/>
        <end position="62"/>
    </location>
</feature>
<feature type="transmembrane region" description="Helical" evidence="1">
    <location>
        <begin position="82"/>
        <end position="102"/>
    </location>
</feature>
<feature type="transmembrane region" description="Helical" evidence="1">
    <location>
        <begin position="108"/>
        <end position="128"/>
    </location>
</feature>
<feature type="transmembrane region" description="Helical" evidence="1">
    <location>
        <begin position="143"/>
        <end position="163"/>
    </location>
</feature>
<feature type="transmembrane region" description="Helical" evidence="1">
    <location>
        <begin position="181"/>
        <end position="201"/>
    </location>
</feature>
<feature type="transmembrane region" description="Helical" evidence="1">
    <location>
        <begin position="221"/>
        <end position="241"/>
    </location>
</feature>
<feature type="transmembrane region" description="Helical" evidence="1">
    <location>
        <begin position="248"/>
        <end position="264"/>
    </location>
</feature>
<accession>P62464</accession>
<keyword id="KW-0046">Antibiotic resistance</keyword>
<keyword id="KW-0997">Cell inner membrane</keyword>
<keyword id="KW-1003">Cell membrane</keyword>
<keyword id="KW-0133">Cell shape</keyword>
<keyword id="KW-0961">Cell wall biogenesis/degradation</keyword>
<keyword id="KW-0378">Hydrolase</keyword>
<keyword id="KW-0472">Membrane</keyword>
<keyword id="KW-0573">Peptidoglycan synthesis</keyword>
<keyword id="KW-1185">Reference proteome</keyword>
<keyword id="KW-0812">Transmembrane</keyword>
<keyword id="KW-1133">Transmembrane helix</keyword>
<reference key="1">
    <citation type="journal article" date="2004" name="Nat. Biotechnol.">
        <title>The genome sequence of the anaerobic, sulfate-reducing bacterium Desulfovibrio vulgaris Hildenborough.</title>
        <authorList>
            <person name="Heidelberg J.F."/>
            <person name="Seshadri R."/>
            <person name="Haveman S.A."/>
            <person name="Hemme C.L."/>
            <person name="Paulsen I.T."/>
            <person name="Kolonay J.F."/>
            <person name="Eisen J.A."/>
            <person name="Ward N.L."/>
            <person name="Methe B.A."/>
            <person name="Brinkac L.M."/>
            <person name="Daugherty S.C."/>
            <person name="DeBoy R.T."/>
            <person name="Dodson R.J."/>
            <person name="Durkin A.S."/>
            <person name="Madupu R."/>
            <person name="Nelson W.C."/>
            <person name="Sullivan S.A."/>
            <person name="Fouts D.E."/>
            <person name="Haft D.H."/>
            <person name="Selengut J."/>
            <person name="Peterson J.D."/>
            <person name="Davidsen T.M."/>
            <person name="Zafar N."/>
            <person name="Zhou L."/>
            <person name="Radune D."/>
            <person name="Dimitrov G."/>
            <person name="Hance M."/>
            <person name="Tran K."/>
            <person name="Khouri H.M."/>
            <person name="Gill J."/>
            <person name="Utterback T.R."/>
            <person name="Feldblyum T.V."/>
            <person name="Wall J.D."/>
            <person name="Voordouw G."/>
            <person name="Fraser C.M."/>
        </authorList>
    </citation>
    <scope>NUCLEOTIDE SEQUENCE [LARGE SCALE GENOMIC DNA]</scope>
    <source>
        <strain>ATCC 29579 / DSM 644 / CCUG 34227 / NCIMB 8303 / VKM B-1760 / Hildenborough</strain>
    </source>
</reference>
<proteinExistence type="inferred from homology"/>
<gene>
    <name evidence="1" type="primary">uppP</name>
    <name type="synonym">bacA</name>
    <name type="synonym">upk</name>
    <name type="ordered locus">DVU_1660</name>
</gene>
<organism>
    <name type="scientific">Nitratidesulfovibrio vulgaris (strain ATCC 29579 / DSM 644 / CCUG 34227 / NCIMB 8303 / VKM B-1760 / Hildenborough)</name>
    <name type="common">Desulfovibrio vulgaris</name>
    <dbReference type="NCBI Taxonomy" id="882"/>
    <lineage>
        <taxon>Bacteria</taxon>
        <taxon>Pseudomonadati</taxon>
        <taxon>Thermodesulfobacteriota</taxon>
        <taxon>Desulfovibrionia</taxon>
        <taxon>Desulfovibrionales</taxon>
        <taxon>Desulfovibrionaceae</taxon>
        <taxon>Nitratidesulfovibrio</taxon>
    </lineage>
</organism>
<protein>
    <recommendedName>
        <fullName evidence="1">Undecaprenyl-diphosphatase</fullName>
        <ecNumber evidence="1">3.6.1.27</ecNumber>
    </recommendedName>
    <alternativeName>
        <fullName evidence="1">Bacitracin resistance protein</fullName>
    </alternativeName>
    <alternativeName>
        <fullName evidence="1">Undecaprenyl pyrophosphate phosphatase</fullName>
    </alternativeName>
</protein>
<evidence type="ECO:0000255" key="1">
    <source>
        <dbReference type="HAMAP-Rule" id="MF_01006"/>
    </source>
</evidence>
<name>UPPP_NITV2</name>
<sequence length="265" mass="28820">MSDMITAAILGLVEGLTEFLPVSSTGHLIITGELLGFTGPKATTFEVAIQLGAILAVVVLYWDRFWGLLRPQPYVRFAGLRGIMLLLLTSLPASVLGLAAHSTIKAHLFTPSTVAIALAVGAIFMLLVERRTERPRYMTLDEMSPALALGIGCFQCLALWPGFSRSAATIMGGMLLGARRGLAAEYSFIAAVPIMFAATGYDLLKSWTLFTPADLPFFATGFVVSFLSAWAAVKLFIALVGRMTFRPFAWYRLAIAPLVYYFMAY</sequence>